<protein>
    <recommendedName>
        <fullName evidence="2">Translation initiation factor IF-2</fullName>
    </recommendedName>
</protein>
<name>IF2_POLNS</name>
<reference key="1">
    <citation type="journal article" date="2013" name="Proc. Natl. Acad. Sci. U.S.A.">
        <title>Polynucleobacter necessarius, a model for genome reduction in both free-living and symbiotic bacteria.</title>
        <authorList>
            <person name="Boscaro V."/>
            <person name="Felletti M."/>
            <person name="Vannini C."/>
            <person name="Ackerman M.S."/>
            <person name="Chain P.S."/>
            <person name="Malfatti S."/>
            <person name="Vergez L.M."/>
            <person name="Shin M."/>
            <person name="Doak T.G."/>
            <person name="Lynch M."/>
            <person name="Petroni G."/>
        </authorList>
    </citation>
    <scope>NUCLEOTIDE SEQUENCE [LARGE SCALE GENOMIC DNA]</scope>
    <source>
        <strain>STIR1</strain>
    </source>
</reference>
<accession>B1XV89</accession>
<dbReference type="EMBL" id="CP001010">
    <property type="protein sequence ID" value="ACB44266.1"/>
    <property type="molecule type" value="Genomic_DNA"/>
</dbReference>
<dbReference type="SMR" id="B1XV89"/>
<dbReference type="STRING" id="452638.Pnec_1093"/>
<dbReference type="KEGG" id="pne:Pnec_1093"/>
<dbReference type="eggNOG" id="COG0532">
    <property type="taxonomic scope" value="Bacteria"/>
</dbReference>
<dbReference type="HOGENOM" id="CLU_006301_6_1_4"/>
<dbReference type="OrthoDB" id="9811804at2"/>
<dbReference type="GO" id="GO:0005829">
    <property type="term" value="C:cytosol"/>
    <property type="evidence" value="ECO:0007669"/>
    <property type="project" value="TreeGrafter"/>
</dbReference>
<dbReference type="GO" id="GO:0005525">
    <property type="term" value="F:GTP binding"/>
    <property type="evidence" value="ECO:0007669"/>
    <property type="project" value="UniProtKB-KW"/>
</dbReference>
<dbReference type="GO" id="GO:0003924">
    <property type="term" value="F:GTPase activity"/>
    <property type="evidence" value="ECO:0007669"/>
    <property type="project" value="UniProtKB-UniRule"/>
</dbReference>
<dbReference type="GO" id="GO:0097216">
    <property type="term" value="F:guanosine tetraphosphate binding"/>
    <property type="evidence" value="ECO:0007669"/>
    <property type="project" value="UniProtKB-ARBA"/>
</dbReference>
<dbReference type="GO" id="GO:0003743">
    <property type="term" value="F:translation initiation factor activity"/>
    <property type="evidence" value="ECO:0007669"/>
    <property type="project" value="UniProtKB-UniRule"/>
</dbReference>
<dbReference type="CDD" id="cd01887">
    <property type="entry name" value="IF2_eIF5B"/>
    <property type="match status" value="1"/>
</dbReference>
<dbReference type="CDD" id="cd03702">
    <property type="entry name" value="IF2_mtIF2_II"/>
    <property type="match status" value="1"/>
</dbReference>
<dbReference type="CDD" id="cd03692">
    <property type="entry name" value="mtIF2_IVc"/>
    <property type="match status" value="1"/>
</dbReference>
<dbReference type="FunFam" id="2.40.30.10:FF:000007">
    <property type="entry name" value="Translation initiation factor IF-2"/>
    <property type="match status" value="1"/>
</dbReference>
<dbReference type="FunFam" id="2.40.30.10:FF:000008">
    <property type="entry name" value="Translation initiation factor IF-2"/>
    <property type="match status" value="1"/>
</dbReference>
<dbReference type="FunFam" id="3.40.50.10050:FF:000001">
    <property type="entry name" value="Translation initiation factor IF-2"/>
    <property type="match status" value="1"/>
</dbReference>
<dbReference type="FunFam" id="3.40.50.300:FF:000019">
    <property type="entry name" value="Translation initiation factor IF-2"/>
    <property type="match status" value="1"/>
</dbReference>
<dbReference type="Gene3D" id="3.40.50.300">
    <property type="entry name" value="P-loop containing nucleotide triphosphate hydrolases"/>
    <property type="match status" value="1"/>
</dbReference>
<dbReference type="Gene3D" id="3.30.56.50">
    <property type="entry name" value="Putative DNA-binding domain, N-terminal subdomain of bacterial translation initiation factor IF2"/>
    <property type="match status" value="1"/>
</dbReference>
<dbReference type="Gene3D" id="2.40.30.10">
    <property type="entry name" value="Translation factors"/>
    <property type="match status" value="2"/>
</dbReference>
<dbReference type="Gene3D" id="3.40.50.10050">
    <property type="entry name" value="Translation initiation factor IF- 2, domain 3"/>
    <property type="match status" value="1"/>
</dbReference>
<dbReference type="HAMAP" id="MF_00100_B">
    <property type="entry name" value="IF_2_B"/>
    <property type="match status" value="1"/>
</dbReference>
<dbReference type="InterPro" id="IPR009061">
    <property type="entry name" value="DNA-bd_dom_put_sf"/>
</dbReference>
<dbReference type="InterPro" id="IPR053905">
    <property type="entry name" value="EF-G-like_DII"/>
</dbReference>
<dbReference type="InterPro" id="IPR004161">
    <property type="entry name" value="EFTu-like_2"/>
</dbReference>
<dbReference type="InterPro" id="IPR013575">
    <property type="entry name" value="IF2_assoc_dom_bac"/>
</dbReference>
<dbReference type="InterPro" id="IPR044145">
    <property type="entry name" value="IF2_II"/>
</dbReference>
<dbReference type="InterPro" id="IPR006847">
    <property type="entry name" value="IF2_N"/>
</dbReference>
<dbReference type="InterPro" id="IPR027417">
    <property type="entry name" value="P-loop_NTPase"/>
</dbReference>
<dbReference type="InterPro" id="IPR005225">
    <property type="entry name" value="Small_GTP-bd"/>
</dbReference>
<dbReference type="InterPro" id="IPR000795">
    <property type="entry name" value="T_Tr_GTP-bd_dom"/>
</dbReference>
<dbReference type="InterPro" id="IPR000178">
    <property type="entry name" value="TF_IF2_bacterial-like"/>
</dbReference>
<dbReference type="InterPro" id="IPR015760">
    <property type="entry name" value="TIF_IF2"/>
</dbReference>
<dbReference type="InterPro" id="IPR023115">
    <property type="entry name" value="TIF_IF2_dom3"/>
</dbReference>
<dbReference type="InterPro" id="IPR036925">
    <property type="entry name" value="TIF_IF2_dom3_sf"/>
</dbReference>
<dbReference type="InterPro" id="IPR009000">
    <property type="entry name" value="Transl_B-barrel_sf"/>
</dbReference>
<dbReference type="NCBIfam" id="TIGR00487">
    <property type="entry name" value="IF-2"/>
    <property type="match status" value="1"/>
</dbReference>
<dbReference type="NCBIfam" id="TIGR00231">
    <property type="entry name" value="small_GTP"/>
    <property type="match status" value="1"/>
</dbReference>
<dbReference type="PANTHER" id="PTHR43381:SF5">
    <property type="entry name" value="TR-TYPE G DOMAIN-CONTAINING PROTEIN"/>
    <property type="match status" value="1"/>
</dbReference>
<dbReference type="PANTHER" id="PTHR43381">
    <property type="entry name" value="TRANSLATION INITIATION FACTOR IF-2-RELATED"/>
    <property type="match status" value="1"/>
</dbReference>
<dbReference type="Pfam" id="PF22042">
    <property type="entry name" value="EF-G_D2"/>
    <property type="match status" value="1"/>
</dbReference>
<dbReference type="Pfam" id="PF00009">
    <property type="entry name" value="GTP_EFTU"/>
    <property type="match status" value="1"/>
</dbReference>
<dbReference type="Pfam" id="PF03144">
    <property type="entry name" value="GTP_EFTU_D2"/>
    <property type="match status" value="1"/>
</dbReference>
<dbReference type="Pfam" id="PF11987">
    <property type="entry name" value="IF-2"/>
    <property type="match status" value="1"/>
</dbReference>
<dbReference type="Pfam" id="PF08364">
    <property type="entry name" value="IF2_assoc"/>
    <property type="match status" value="1"/>
</dbReference>
<dbReference type="Pfam" id="PF04760">
    <property type="entry name" value="IF2_N"/>
    <property type="match status" value="2"/>
</dbReference>
<dbReference type="SUPFAM" id="SSF52156">
    <property type="entry name" value="Initiation factor IF2/eIF5b, domain 3"/>
    <property type="match status" value="1"/>
</dbReference>
<dbReference type="SUPFAM" id="SSF52540">
    <property type="entry name" value="P-loop containing nucleoside triphosphate hydrolases"/>
    <property type="match status" value="1"/>
</dbReference>
<dbReference type="SUPFAM" id="SSF46955">
    <property type="entry name" value="Putative DNA-binding domain"/>
    <property type="match status" value="1"/>
</dbReference>
<dbReference type="SUPFAM" id="SSF50447">
    <property type="entry name" value="Translation proteins"/>
    <property type="match status" value="2"/>
</dbReference>
<dbReference type="PROSITE" id="PS51722">
    <property type="entry name" value="G_TR_2"/>
    <property type="match status" value="1"/>
</dbReference>
<dbReference type="PROSITE" id="PS01176">
    <property type="entry name" value="IF2"/>
    <property type="match status" value="1"/>
</dbReference>
<organism>
    <name type="scientific">Polynucleobacter necessarius subsp. necessarius (strain STIR1)</name>
    <dbReference type="NCBI Taxonomy" id="452638"/>
    <lineage>
        <taxon>Bacteria</taxon>
        <taxon>Pseudomonadati</taxon>
        <taxon>Pseudomonadota</taxon>
        <taxon>Betaproteobacteria</taxon>
        <taxon>Burkholderiales</taxon>
        <taxon>Burkholderiaceae</taxon>
        <taxon>Polynucleobacter</taxon>
    </lineage>
</organism>
<sequence>MATTVKVLAKELKRTAPDLLEQLKAAGIEKGSEDDSITEKDKTVLLEHLQKAHGSTDTGARKKITLIKRESSEIRQADSAGRTRTVQVEVRKKRVLVKAGDKAPEEVAAQPVKQVAPAAPAKPVISEEELEKRAAEATRQAELLARQEAEMKAAEEARQKEVTVPVVKEVAPVDKAPVAPAVAEKKLAADKAAKDLAASKEKELADIRARRAAAEAEALAIRDMMSAPARVLKAPSEVAAEEAKKGTLHKPAKAEGAEDKKKAATKVGGKTIKSSETSSTWQEEGTRKSGGLKTRGDTSGGVGGWRSGGGRKKQRQIAEANVDTNFQVPIEPVIRDVHVPETITVAELAHAMAVKSAEVIKLLMGMGQMVTINQVLDQDTAMIIVEEMGHKAHAAKLDDPDLDLGTEGHDAELLPRPPVVTVMGHVDHGKTSLLDKIRTAKVAIGEVGGITQHIGAYHVETPRGMITFLDTPGHEAFTAMRARGAKATDIVILVVAADDGVMPQTKEAIHHAIAGGVPLVVAINKIDKPEANSERVKAELVAEQVVLEEYGGDVPFIPVSAKTGEGIDALLENVLLQAEILELKAPKEAPAQGLVIEARLDKGKGPVATVLVQSGTLKRGDMLLAGSSFGRVRAMMDENGKPCNEAGPSIPVEIQGLSEVPAAGEAVQVMPDERKAREIALFRQGKFRDVKLAKQQAVKLENMMETIGEGAIEAKLLPLIIKADVQGSQEALSQLLMKLSIPEVKVQIVHAAVGGITETDVNLAVVSKAVIIGFNSRADAAARKLAENNGVDIRYHNIIYDAVDEVKLALSGMLIPGKKEEITGLVEIRQVFLVSKVGAIAGCLVVDGIVKRTSSVRLLRDNVVVWTGELDSLKRFKDDAKEVRAGVECGLSLKGYNDIKEGDQLEVFEVTEVARSL</sequence>
<gene>
    <name evidence="2" type="primary">infB</name>
    <name type="ordered locus">Pnec_1093</name>
</gene>
<proteinExistence type="inferred from homology"/>
<feature type="chain" id="PRO_1000093810" description="Translation initiation factor IF-2">
    <location>
        <begin position="1"/>
        <end position="917"/>
    </location>
</feature>
<feature type="domain" description="tr-type G">
    <location>
        <begin position="415"/>
        <end position="582"/>
    </location>
</feature>
<feature type="region of interest" description="Disordered" evidence="3">
    <location>
        <begin position="241"/>
        <end position="312"/>
    </location>
</feature>
<feature type="region of interest" description="G1" evidence="1">
    <location>
        <begin position="424"/>
        <end position="431"/>
    </location>
</feature>
<feature type="region of interest" description="G2" evidence="1">
    <location>
        <begin position="449"/>
        <end position="453"/>
    </location>
</feature>
<feature type="region of interest" description="G3" evidence="1">
    <location>
        <begin position="470"/>
        <end position="473"/>
    </location>
</feature>
<feature type="region of interest" description="G4" evidence="1">
    <location>
        <begin position="524"/>
        <end position="527"/>
    </location>
</feature>
<feature type="region of interest" description="G5" evidence="1">
    <location>
        <begin position="560"/>
        <end position="562"/>
    </location>
</feature>
<feature type="compositionally biased region" description="Basic and acidic residues" evidence="3">
    <location>
        <begin position="252"/>
        <end position="262"/>
    </location>
</feature>
<feature type="compositionally biased region" description="Polar residues" evidence="3">
    <location>
        <begin position="274"/>
        <end position="283"/>
    </location>
</feature>
<feature type="compositionally biased region" description="Gly residues" evidence="3">
    <location>
        <begin position="298"/>
        <end position="308"/>
    </location>
</feature>
<feature type="binding site" evidence="2">
    <location>
        <begin position="424"/>
        <end position="431"/>
    </location>
    <ligand>
        <name>GTP</name>
        <dbReference type="ChEBI" id="CHEBI:37565"/>
    </ligand>
</feature>
<feature type="binding site" evidence="2">
    <location>
        <begin position="470"/>
        <end position="474"/>
    </location>
    <ligand>
        <name>GTP</name>
        <dbReference type="ChEBI" id="CHEBI:37565"/>
    </ligand>
</feature>
<feature type="binding site" evidence="2">
    <location>
        <begin position="524"/>
        <end position="527"/>
    </location>
    <ligand>
        <name>GTP</name>
        <dbReference type="ChEBI" id="CHEBI:37565"/>
    </ligand>
</feature>
<comment type="function">
    <text evidence="2">One of the essential components for the initiation of protein synthesis. Protects formylmethionyl-tRNA from spontaneous hydrolysis and promotes its binding to the 30S ribosomal subunits. Also involved in the hydrolysis of GTP during the formation of the 70S ribosomal complex.</text>
</comment>
<comment type="subcellular location">
    <subcellularLocation>
        <location evidence="2">Cytoplasm</location>
    </subcellularLocation>
</comment>
<comment type="similarity">
    <text evidence="2">Belongs to the TRAFAC class translation factor GTPase superfamily. Classic translation factor GTPase family. IF-2 subfamily.</text>
</comment>
<evidence type="ECO:0000250" key="1"/>
<evidence type="ECO:0000255" key="2">
    <source>
        <dbReference type="HAMAP-Rule" id="MF_00100"/>
    </source>
</evidence>
<evidence type="ECO:0000256" key="3">
    <source>
        <dbReference type="SAM" id="MobiDB-lite"/>
    </source>
</evidence>
<keyword id="KW-0963">Cytoplasm</keyword>
<keyword id="KW-0342">GTP-binding</keyword>
<keyword id="KW-0396">Initiation factor</keyword>
<keyword id="KW-0547">Nucleotide-binding</keyword>
<keyword id="KW-0648">Protein biosynthesis</keyword>